<protein>
    <recommendedName>
        <fullName>ORF2 protein</fullName>
    </recommendedName>
</protein>
<name>ORF2_TTVV3</name>
<sequence>MWQPPTQNGTQLERHWFESVWRSHAAFCSCGDCIGHLQHLATNLGRPPAPQPPRDQHPPHIRGLPALPAPPSNRNSWPGTGGDAAGGEAGGSRGAGDGGDGELADEDLLDAIALAAE</sequence>
<gene>
    <name type="ORF">ORF2</name>
</gene>
<organismHost>
    <name type="scientific">Homo sapiens</name>
    <name type="common">Human</name>
    <dbReference type="NCBI Taxonomy" id="9606"/>
</organismHost>
<evidence type="ECO:0000256" key="1">
    <source>
        <dbReference type="SAM" id="MobiDB-lite"/>
    </source>
</evidence>
<organism>
    <name type="scientific">Torque teno virus (isolate Human/Finland/Hel32/2002)</name>
    <name type="common">TTV</name>
    <name type="synonym">Torque teno virus genotype 6</name>
    <dbReference type="NCBI Taxonomy" id="687342"/>
    <lineage>
        <taxon>Viruses</taxon>
        <taxon>Viruses incertae sedis</taxon>
        <taxon>Anelloviridae</taxon>
        <taxon>Alphatorquevirus</taxon>
        <taxon>Alphatorquevirus homin3</taxon>
    </lineage>
</organism>
<reference key="1">
    <citation type="journal article" date="2002" name="J. Gen. Virol.">
        <title>Cloning and sequencing of TT virus genotype 6 and expression of antigenic open reading frame 2 proteins.</title>
        <authorList>
            <person name="Kakkola L."/>
            <person name="Hedman K."/>
            <person name="Vanrobaeys H."/>
            <person name="Hedman L."/>
            <person name="Soderlund-Venermo M."/>
        </authorList>
    </citation>
    <scope>NUCLEOTIDE SEQUENCE [GENOMIC DNA]</scope>
</reference>
<reference key="2">
    <citation type="journal article" date="2005" name="J. Virol.">
        <title>Human circovirus TT virus genotype 6 expresses six proteins following transfection of a full-length clone.</title>
        <authorList>
            <person name="Qiu J."/>
            <person name="Kakkola L."/>
            <person name="Cheng F."/>
            <person name="Ye C."/>
            <person name="Soderlund-Venermo M."/>
            <person name="Hedman K."/>
            <person name="Pintel D.J."/>
        </authorList>
    </citation>
    <scope>IDENTIFICATION</scope>
</reference>
<reference key="3">
    <citation type="journal article" date="2007" name="FEBS J.">
        <title>Construction and biological activity of a full-length molecular clone of human Torque teno virus (TTV) genotype 6.</title>
        <authorList>
            <person name="Kakkola L."/>
            <person name="Tommiska J."/>
            <person name="Boele L.C."/>
            <person name="Miettinen S."/>
            <person name="Blom T."/>
            <person name="Kekarainen T."/>
            <person name="Qiu J."/>
            <person name="Pintel D."/>
            <person name="Hoeben R.C."/>
            <person name="Hedman K."/>
            <person name="Soderlund-Venermo M."/>
        </authorList>
    </citation>
    <scope>INFECTIOUS CLONE</scope>
</reference>
<reference key="4">
    <citation type="journal article" date="2007" name="Rev. Med. Virol.">
        <title>Torque teno virus (TTV): current status.</title>
        <authorList>
            <person name="Hino S."/>
            <person name="Miyata H."/>
        </authorList>
    </citation>
    <scope>REVIEW</scope>
</reference>
<accession>A7XCD9</accession>
<proteinExistence type="predicted"/>
<keyword id="KW-1185">Reference proteome</keyword>
<dbReference type="EMBL" id="AY666122">
    <property type="protein sequence ID" value="ABV25034.1"/>
    <property type="molecule type" value="Genomic_DNA"/>
</dbReference>
<dbReference type="RefSeq" id="YP_003587866.1">
    <property type="nucleotide sequence ID" value="NC_014081.1"/>
</dbReference>
<dbReference type="KEGG" id="vg:9086627"/>
<dbReference type="OrthoDB" id="27134at10239"/>
<dbReference type="Proteomes" id="UP000008257">
    <property type="component" value="Segment"/>
</dbReference>
<dbReference type="InterPro" id="IPR004118">
    <property type="entry name" value="HEV_TT_vir_Orf2/Gyrovir_Vp2_N"/>
</dbReference>
<dbReference type="Pfam" id="PF02957">
    <property type="entry name" value="TT_ORF2-like"/>
    <property type="match status" value="1"/>
</dbReference>
<feature type="chain" id="PRO_0000315346" description="ORF2 protein">
    <location>
        <begin position="1"/>
        <end position="117"/>
    </location>
</feature>
<feature type="region of interest" description="Disordered" evidence="1">
    <location>
        <begin position="43"/>
        <end position="104"/>
    </location>
</feature>
<feature type="compositionally biased region" description="Gly residues" evidence="1">
    <location>
        <begin position="79"/>
        <end position="98"/>
    </location>
</feature>